<reference key="1">
    <citation type="journal article" date="2019" name="Molecules">
        <title>Biosynthetic gene content of the 'Perfume Lichens' Evernia prunastri and Pseudevernia furfuracea.</title>
        <authorList>
            <person name="Calchera A."/>
            <person name="Dal Grande F."/>
            <person name="Bode H.B."/>
            <person name="Schmitt I."/>
        </authorList>
    </citation>
    <scope>NUCLEOTIDE SEQUENCE [GENOMIC DNA]</scope>
</reference>
<reference key="2">
    <citation type="journal article" date="2021" name="Metab. Eng. Commun.">
        <title>Identification of a lichen depside polyketide synthase gene by heterologous expression in Saccharomyces cerevisiae.</title>
        <authorList>
            <person name="Kealey J.T."/>
            <person name="Craig J.P."/>
            <person name="Barr P.J."/>
        </authorList>
    </citation>
    <scope>IDENTIFICATION</scope>
    <scope>DOMAIN</scope>
    <scope>FUNCTION</scope>
    <scope>CATALYTIC ACTIVITY</scope>
</reference>
<organism>
    <name type="scientific">Pseudevernia furfuracea</name>
    <name type="common">Tree moss</name>
    <dbReference type="NCBI Taxonomy" id="136282"/>
    <lineage>
        <taxon>Eukaryota</taxon>
        <taxon>Fungi</taxon>
        <taxon>Dikarya</taxon>
        <taxon>Ascomycota</taxon>
        <taxon>Pezizomycotina</taxon>
        <taxon>Lecanoromycetes</taxon>
        <taxon>OSLEUM clade</taxon>
        <taxon>Lecanoromycetidae</taxon>
        <taxon>Lecanorales</taxon>
        <taxon>Lecanorineae</taxon>
        <taxon>Parmeliaceae</taxon>
        <taxon>Pseudevernia</taxon>
    </lineage>
</organism>
<comment type="function">
    <text evidence="6 8">Non-reducing polyketide synthase; part of a gene cluster that mediates the biosynthesis of a yet unidentified depside/depsidone compound (Probable). The first step in the pathway is performed by the PKS PFUR17_0229 that condenses 2 acetyl-CoA starter units with 6 malonyl-CoA units to produce lecanoric acid (LA), also known as orsellinate depside (PubMed:34430202). The biosynthesis occurs via the formation of 2 orsellinate intermediates fused together by the C-terminal thioesterase (TE) domain that finally releases lecanoric acid (PubMed:34430202). In addition to the PKS gene, the PFUR17 gene cluster contains closely linked genes encoding a cytochrome P-450 and a laccase (phenol oxidase), directly upstream and downstream respectively, so it is likely that lecanoric acid is an intermediate in a longer biosynthetic pathway (Probable).</text>
</comment>
<comment type="catalytic activity">
    <reaction evidence="6">
        <text>6 malonyl-CoA + 2 acetyl-CoA + 5 H(+) = o-orsellinate depside + 6 CO2 + 8 CoA + H2O</text>
        <dbReference type="Rhea" id="RHEA:72467"/>
        <dbReference type="ChEBI" id="CHEBI:15377"/>
        <dbReference type="ChEBI" id="CHEBI:15378"/>
        <dbReference type="ChEBI" id="CHEBI:16526"/>
        <dbReference type="ChEBI" id="CHEBI:57287"/>
        <dbReference type="ChEBI" id="CHEBI:57288"/>
        <dbReference type="ChEBI" id="CHEBI:57384"/>
        <dbReference type="ChEBI" id="CHEBI:57548"/>
    </reaction>
    <physiologicalReaction direction="left-to-right" evidence="6">
        <dbReference type="Rhea" id="RHEA:72468"/>
    </physiologicalReaction>
</comment>
<comment type="cofactor">
    <cofactor evidence="2">
        <name>pantetheine 4'-phosphate</name>
        <dbReference type="ChEBI" id="CHEBI:47942"/>
    </cofactor>
</comment>
<comment type="domain">
    <text evidence="8">Multidomain protein; including a starter unit:ACP transacylase (SAT) that selects the starter unit; a ketosynthase (KS) that catalyzes repeated decarboxylative condensation to elongate the polyketide backbone; a malonyl-CoA:ACP transacylase (MAT) that selects and transfers the extender unit malonyl-CoA; a product template (PT) domain that controls the immediate cyclization regioselectivity of the reactive polyketide backbone; and an acyl-carrier protein (ACP) that serves as the tether of the growing and completed polyketide via its phosphopantetheinyl arm.</text>
</comment>
<comment type="domain">
    <text evidence="8">The release of the polyketide chain from the non-reducing polyketide synthase is mediated by the thioesterase (TE) domain localized at the C-ter of the protein.</text>
</comment>
<gene>
    <name evidence="7" type="ORF">PFUR17_0229</name>
</gene>
<evidence type="ECO:0000255" key="1"/>
<evidence type="ECO:0000255" key="2">
    <source>
        <dbReference type="PROSITE-ProRule" id="PRU00258"/>
    </source>
</evidence>
<evidence type="ECO:0000255" key="3">
    <source>
        <dbReference type="PROSITE-ProRule" id="PRU01348"/>
    </source>
</evidence>
<evidence type="ECO:0000255" key="4">
    <source>
        <dbReference type="PROSITE-ProRule" id="PRU01363"/>
    </source>
</evidence>
<evidence type="ECO:0000256" key="5">
    <source>
        <dbReference type="SAM" id="MobiDB-lite"/>
    </source>
</evidence>
<evidence type="ECO:0000269" key="6">
    <source>
    </source>
</evidence>
<evidence type="ECO:0000303" key="7">
    <source>
    </source>
</evidence>
<evidence type="ECO:0000305" key="8">
    <source>
    </source>
</evidence>
<protein>
    <recommendedName>
        <fullName evidence="7">Non-reducing polyketide synthase PFUR17_0229</fullName>
        <shortName evidence="7">NR-PKS PFUR17_0229</shortName>
        <ecNumber evidence="6">2.3.1.-</ecNumber>
    </recommendedName>
    <alternativeName>
        <fullName evidence="7">Lecanoric acid synthase</fullName>
    </alternativeName>
</protein>
<dbReference type="EC" id="2.3.1.-" evidence="6"/>
<dbReference type="SMR" id="P9WES9"/>
<dbReference type="ESTHER" id="pseff-p9wes9">
    <property type="family name" value="Thioesterase"/>
</dbReference>
<dbReference type="GO" id="GO:0004315">
    <property type="term" value="F:3-oxoacyl-[acyl-carrier-protein] synthase activity"/>
    <property type="evidence" value="ECO:0007669"/>
    <property type="project" value="InterPro"/>
</dbReference>
<dbReference type="GO" id="GO:0004312">
    <property type="term" value="F:fatty acid synthase activity"/>
    <property type="evidence" value="ECO:0007669"/>
    <property type="project" value="TreeGrafter"/>
</dbReference>
<dbReference type="GO" id="GO:0031177">
    <property type="term" value="F:phosphopantetheine binding"/>
    <property type="evidence" value="ECO:0007669"/>
    <property type="project" value="InterPro"/>
</dbReference>
<dbReference type="GO" id="GO:0006633">
    <property type="term" value="P:fatty acid biosynthetic process"/>
    <property type="evidence" value="ECO:0007669"/>
    <property type="project" value="InterPro"/>
</dbReference>
<dbReference type="GO" id="GO:0044550">
    <property type="term" value="P:secondary metabolite biosynthetic process"/>
    <property type="evidence" value="ECO:0007669"/>
    <property type="project" value="TreeGrafter"/>
</dbReference>
<dbReference type="CDD" id="cd00833">
    <property type="entry name" value="PKS"/>
    <property type="match status" value="1"/>
</dbReference>
<dbReference type="FunFam" id="3.40.366.10:FF:000002">
    <property type="entry name" value="Probable polyketide synthase 2"/>
    <property type="match status" value="1"/>
</dbReference>
<dbReference type="FunFam" id="1.10.1200.10:FF:000011">
    <property type="entry name" value="Sterigmatocystin biosynthesis polyketide synthase"/>
    <property type="match status" value="1"/>
</dbReference>
<dbReference type="Gene3D" id="3.30.70.3290">
    <property type="match status" value="1"/>
</dbReference>
<dbReference type="Gene3D" id="3.40.47.10">
    <property type="match status" value="1"/>
</dbReference>
<dbReference type="Gene3D" id="1.10.1200.10">
    <property type="entry name" value="ACP-like"/>
    <property type="match status" value="2"/>
</dbReference>
<dbReference type="Gene3D" id="3.40.50.1820">
    <property type="entry name" value="alpha/beta hydrolase"/>
    <property type="match status" value="1"/>
</dbReference>
<dbReference type="Gene3D" id="3.40.366.10">
    <property type="entry name" value="Malonyl-Coenzyme A Acyl Carrier Protein, domain 2"/>
    <property type="match status" value="2"/>
</dbReference>
<dbReference type="Gene3D" id="3.10.129.110">
    <property type="entry name" value="Polyketide synthase dehydratase"/>
    <property type="match status" value="1"/>
</dbReference>
<dbReference type="InterPro" id="IPR029058">
    <property type="entry name" value="AB_hydrolase_fold"/>
</dbReference>
<dbReference type="InterPro" id="IPR001227">
    <property type="entry name" value="Ac_transferase_dom_sf"/>
</dbReference>
<dbReference type="InterPro" id="IPR036736">
    <property type="entry name" value="ACP-like_sf"/>
</dbReference>
<dbReference type="InterPro" id="IPR014043">
    <property type="entry name" value="Acyl_transferase_dom"/>
</dbReference>
<dbReference type="InterPro" id="IPR016035">
    <property type="entry name" value="Acyl_Trfase/lysoPLipase"/>
</dbReference>
<dbReference type="InterPro" id="IPR018201">
    <property type="entry name" value="Ketoacyl_synth_AS"/>
</dbReference>
<dbReference type="InterPro" id="IPR014031">
    <property type="entry name" value="Ketoacyl_synth_C"/>
</dbReference>
<dbReference type="InterPro" id="IPR014030">
    <property type="entry name" value="Ketoacyl_synth_N"/>
</dbReference>
<dbReference type="InterPro" id="IPR016036">
    <property type="entry name" value="Malonyl_transacylase_ACP-bd"/>
</dbReference>
<dbReference type="InterPro" id="IPR020841">
    <property type="entry name" value="PKS_Beta-ketoAc_synthase_dom"/>
</dbReference>
<dbReference type="InterPro" id="IPR042104">
    <property type="entry name" value="PKS_dehydratase_sf"/>
</dbReference>
<dbReference type="InterPro" id="IPR049900">
    <property type="entry name" value="PKS_mFAS_DH"/>
</dbReference>
<dbReference type="InterPro" id="IPR050091">
    <property type="entry name" value="PKS_NRPS_Biosynth_Enz"/>
</dbReference>
<dbReference type="InterPro" id="IPR020806">
    <property type="entry name" value="PKS_PP-bd"/>
</dbReference>
<dbReference type="InterPro" id="IPR009081">
    <property type="entry name" value="PP-bd_ACP"/>
</dbReference>
<dbReference type="InterPro" id="IPR030918">
    <property type="entry name" value="PT_fungal_PKS"/>
</dbReference>
<dbReference type="InterPro" id="IPR032088">
    <property type="entry name" value="SAT"/>
</dbReference>
<dbReference type="InterPro" id="IPR001031">
    <property type="entry name" value="Thioesterase"/>
</dbReference>
<dbReference type="InterPro" id="IPR016039">
    <property type="entry name" value="Thiolase-like"/>
</dbReference>
<dbReference type="NCBIfam" id="TIGR04532">
    <property type="entry name" value="PT_fungal_PKS"/>
    <property type="match status" value="1"/>
</dbReference>
<dbReference type="PANTHER" id="PTHR43775">
    <property type="entry name" value="FATTY ACID SYNTHASE"/>
    <property type="match status" value="1"/>
</dbReference>
<dbReference type="PANTHER" id="PTHR43775:SF37">
    <property type="entry name" value="SI:DKEY-61P9.11"/>
    <property type="match status" value="1"/>
</dbReference>
<dbReference type="Pfam" id="PF00698">
    <property type="entry name" value="Acyl_transf_1"/>
    <property type="match status" value="1"/>
</dbReference>
<dbReference type="Pfam" id="PF22621">
    <property type="entry name" value="CurL-like_PKS_C"/>
    <property type="match status" value="1"/>
</dbReference>
<dbReference type="Pfam" id="PF00109">
    <property type="entry name" value="ketoacyl-synt"/>
    <property type="match status" value="1"/>
</dbReference>
<dbReference type="Pfam" id="PF02801">
    <property type="entry name" value="Ketoacyl-synt_C"/>
    <property type="match status" value="1"/>
</dbReference>
<dbReference type="Pfam" id="PF00550">
    <property type="entry name" value="PP-binding"/>
    <property type="match status" value="2"/>
</dbReference>
<dbReference type="Pfam" id="PF16073">
    <property type="entry name" value="SAT"/>
    <property type="match status" value="1"/>
</dbReference>
<dbReference type="Pfam" id="PF00975">
    <property type="entry name" value="Thioesterase"/>
    <property type="match status" value="1"/>
</dbReference>
<dbReference type="SMART" id="SM00827">
    <property type="entry name" value="PKS_AT"/>
    <property type="match status" value="1"/>
</dbReference>
<dbReference type="SMART" id="SM00825">
    <property type="entry name" value="PKS_KS"/>
    <property type="match status" value="1"/>
</dbReference>
<dbReference type="SMART" id="SM00823">
    <property type="entry name" value="PKS_PP"/>
    <property type="match status" value="2"/>
</dbReference>
<dbReference type="SUPFAM" id="SSF47336">
    <property type="entry name" value="ACP-like"/>
    <property type="match status" value="2"/>
</dbReference>
<dbReference type="SUPFAM" id="SSF53474">
    <property type="entry name" value="alpha/beta-Hydrolases"/>
    <property type="match status" value="1"/>
</dbReference>
<dbReference type="SUPFAM" id="SSF52151">
    <property type="entry name" value="FabD/lysophospholipase-like"/>
    <property type="match status" value="1"/>
</dbReference>
<dbReference type="SUPFAM" id="SSF55048">
    <property type="entry name" value="Probable ACP-binding domain of malonyl-CoA ACP transacylase"/>
    <property type="match status" value="1"/>
</dbReference>
<dbReference type="SUPFAM" id="SSF53901">
    <property type="entry name" value="Thiolase-like"/>
    <property type="match status" value="1"/>
</dbReference>
<dbReference type="PROSITE" id="PS50075">
    <property type="entry name" value="CARRIER"/>
    <property type="match status" value="2"/>
</dbReference>
<dbReference type="PROSITE" id="PS00606">
    <property type="entry name" value="KS3_1"/>
    <property type="match status" value="1"/>
</dbReference>
<dbReference type="PROSITE" id="PS52004">
    <property type="entry name" value="KS3_2"/>
    <property type="match status" value="1"/>
</dbReference>
<dbReference type="PROSITE" id="PS52019">
    <property type="entry name" value="PKS_MFAS_DH"/>
    <property type="match status" value="1"/>
</dbReference>
<feature type="chain" id="PRO_0000456486" description="Non-reducing polyketide synthase PFUR17_0229">
    <location>
        <begin position="1"/>
        <end position="2115"/>
    </location>
</feature>
<feature type="domain" description="Ketosynthase family 3 (KS3)" evidence="3 8">
    <location>
        <begin position="367"/>
        <end position="796"/>
    </location>
</feature>
<feature type="domain" description="PKS/mFAS DH" evidence="4">
    <location>
        <begin position="1282"/>
        <end position="1588"/>
    </location>
</feature>
<feature type="domain" description="Carrier 1" evidence="2">
    <location>
        <begin position="1626"/>
        <end position="1703"/>
    </location>
</feature>
<feature type="domain" description="Carrier 2" evidence="2">
    <location>
        <begin position="1742"/>
        <end position="1819"/>
    </location>
</feature>
<feature type="region of interest" description="N-terminal acylcarrier protein transacylase (SAT) domain (SAT)" evidence="1 8">
    <location>
        <begin position="8"/>
        <end position="246"/>
    </location>
</feature>
<feature type="region of interest" description="Malonyl-CoA:ACP transacylase (MAT) domain" evidence="1 8">
    <location>
        <begin position="895"/>
        <end position="1218"/>
    </location>
</feature>
<feature type="region of interest" description="Product template (PT) domain" evidence="1 8">
    <location>
        <begin position="1279"/>
        <end position="1592"/>
    </location>
</feature>
<feature type="region of interest" description="N-terminal hotdog fold" evidence="4">
    <location>
        <begin position="1282"/>
        <end position="1413"/>
    </location>
</feature>
<feature type="region of interest" description="C-terminal hotdog fold" evidence="4">
    <location>
        <begin position="1441"/>
        <end position="1588"/>
    </location>
</feature>
<feature type="region of interest" description="Disordered" evidence="5">
    <location>
        <begin position="1594"/>
        <end position="1613"/>
    </location>
</feature>
<feature type="region of interest" description="Disordered" evidence="5">
    <location>
        <begin position="1710"/>
        <end position="1742"/>
    </location>
</feature>
<feature type="region of interest" description="Thioesterase (TE) domain" evidence="1 8">
    <location>
        <begin position="1861"/>
        <end position="2097"/>
    </location>
</feature>
<feature type="compositionally biased region" description="Low complexity" evidence="5">
    <location>
        <begin position="1718"/>
        <end position="1733"/>
    </location>
</feature>
<feature type="active site" description="For beta-ketoacyl synthase activity" evidence="3">
    <location>
        <position position="539"/>
    </location>
</feature>
<feature type="active site" description="For beta-ketoacyl synthase activity" evidence="3">
    <location>
        <position position="674"/>
    </location>
</feature>
<feature type="active site" description="For beta-ketoacyl synthase activity" evidence="3">
    <location>
        <position position="713"/>
    </location>
</feature>
<feature type="active site" description="Proton acceptor; for dehydratase activity" evidence="4">
    <location>
        <position position="1315"/>
    </location>
</feature>
<feature type="active site" description="Proton donor; for dehydratase activity" evidence="4">
    <location>
        <position position="1501"/>
    </location>
</feature>
<feature type="modified residue" description="O-(pantetheine 4'-phosphoryl)serine" evidence="2">
    <location>
        <position position="1663"/>
    </location>
</feature>
<feature type="modified residue" description="O-(pantetheine 4'-phosphoryl)serine" evidence="2">
    <location>
        <position position="1779"/>
    </location>
</feature>
<proteinExistence type="evidence at protein level"/>
<sequence>MTTTSRVVLFGDQTVDPSPLIKQLCRHSTHSLTLQTFLQKTYFAVRQELAICEISDRANFPSFDSILALAETYSQSNESNEAVSTVLLCIAQLGLLLSREYNDNVINDSSCYSTTYLVGLCTGMLPAAALAFASSTTQLLELAPEVVRISVRLGLEASRRSAQIEKSHESWATLVPGIPLQEQRDILHRFHDVYPIPASKRAYISAESDSTTTISGPPSTLASLFSFSESLRNTRKISLPITAAFHAPHLGSSDTDKIIGSLSKGNEYHLRRDAVIISTSTGDQITGRSLGEALQQVVWDILREPLRWSTVTHAIAAKFRDQDAVLISAGPVRAANSLRREMTNAGVKIVDSYEMQPLQVSQSRNTSGDIAIVGVAGRLPGGETLEEIWENLEKGKDLHKEIPKDRFDVKTHCDPSGKIKNTTLTPYGCFLDRPGFFDARLFNMSPREAAQTDPAQRLLLLTTYEALEMSGYTPNGSPSSASDRIGTFFGQTLDDYREANASQNIDMYYVTGGIRAFGPGRLNYHFKWEGPSYCVDAACSSSALSVQMAMSSLRARECDTAVAGGTNILTGVDMFSGLSRGSFLSPTGSCKTFDDEADGYCRGEGVGSVVLKRLEDAIAEGDNIQAVIKSAATNHSAHAISITHPHAGTQQKLIRQVLREADVEADEIDYVEMHGTGTQAGDATEFTSVTKVLSDRTKDNPLHIGAVKANFGHAEAAAGTNSLIKILMMMRKNKIPPHVGIKGRINHKFPPLDKVNVSIDRALVAFKAHAKGDGKRRVLLNNFNATGGNTSLVLEDPPETVTEGEDPRTAWVVAVSAKTSNSFTQNQQRLLNYVESNPETQLQDLSYTTTARRMHHDTYRKAYAVESMDQLVRSMRKDLSSPSEPTAITGSSPSIFAFTGQGAQYLGMGRQLFETNTSFRQNILDFDRICVRQGLPSFKWLVTSSTSDESVPSPSESQLAMVSIAVALVSLWQSWGIVPSAVIGHSLGEYAALCVAGVLSVSDTLYLVGKRAEMMEKKCIANSHAMLAVQSGSELIQQIIHAEKISTCELACSNGPSNTVVSGTGKDINSLAEKLDDMGVKKTLLKLPYAFHSAQMDPILEDIRAIASNVEFLKPTVPIASTLLGSLVRDQGVITAEYLSRQTRQPVKFQEALYSLRSEGIAGDEALWIEVGAHPLCHSMVRSTLGLSPTKALPTLRRDEDCWSTISKSISNAYNSGAKFMWTEYHRDFRGALKLLELPSYAFDLKNYWIQHEGDWSLRKGEKMIASSTPTVPQQTFSTTCLQKVESETFTQDSASVAFSSRLAEPSLNTAVRGHLVNNVGLCPSSVYADVAFTAAWYIASRMAPSELVPAMDLSTMEVFRPLIVDKETSQILHVSASRKPGEQVVKVQISSQDMNGSKDHANCTVMYGDGQQWIDEWQLNAYLVQSRVDQLIQPVKPASVHRLLKEMIYRQFQTVVTYSKEYHNIDEIFMDCDLNETAANIRFQPTAGNGNFIYSPYWIDTVAHLAGFVLNASTKTPADTVFISHGWQSFRIAAPLSDEKTYRGYVRMQPIGTRGVMAGDVYIFDGDRIVVLCKGIKFQKMKRNILQSLLSTGHEETPPARPVPSKRTVQGSVTETKAAITPSIKAASGGFSNILETIASEVGIEVSEITDDGKISDLGVDSLLTISILGRLRSETGLDLPSSLFIAYPTVAQLRNFFLDKVATSQSVFDDEESEMSSSTAGSTPGSSTSHGNQNTTVTTPAEPDVVAILMSIIAREVGIDATEIQPSTPFADLGVDSLLTISILDSFKSEMRMSLAATFFHENPTFTDVQKALGVPSMPQKSLKMPSEFPEMNMGPSNQSVRSKSSILQGRPASNRPALFLLPDGAGSMFSYISLPALPSGVPVYGLDSPFHNSPKDYTVSFEEVASIFIKEIRAIQPRGPYMLGGWSLGGILAYEASRQLIAQGETITNLIMIDSPCPGTLPPLPSPTLNLLEKAGIFDGLSASSGPITERTRLHFLGSVRALENYTVKPIPADRSPGKVTVIWAQDGVLEGREDVGGEEWMADSSGGDANADMEKAKQWLTGKRTSFGPSGWDKLTGAEVQCHVVGGNHFSIMFPPKIEAVAVAMATGLPA</sequence>
<name>LECAS_PSEFF</name>
<accession>P9WES9</accession>
<keyword id="KW-0511">Multifunctional enzyme</keyword>
<keyword id="KW-0596">Phosphopantetheine</keyword>
<keyword id="KW-0597">Phosphoprotein</keyword>
<keyword id="KW-0677">Repeat</keyword>
<keyword id="KW-0808">Transferase</keyword>